<keyword id="KW-0106">Calcium</keyword>
<keyword id="KW-0130">Cell adhesion</keyword>
<keyword id="KW-1003">Cell membrane</keyword>
<keyword id="KW-1015">Disulfide bond</keyword>
<keyword id="KW-0245">EGF-like domain</keyword>
<keyword id="KW-0325">Glycoprotein</keyword>
<keyword id="KW-0401">Integrin</keyword>
<keyword id="KW-0460">Magnesium</keyword>
<keyword id="KW-0472">Membrane</keyword>
<keyword id="KW-0479">Metal-binding</keyword>
<keyword id="KW-0597">Phosphoprotein</keyword>
<keyword id="KW-0675">Receptor</keyword>
<keyword id="KW-0677">Repeat</keyword>
<keyword id="KW-0812">Transmembrane</keyword>
<keyword id="KW-1133">Transmembrane helix</keyword>
<dbReference type="EMBL" id="L12231">
    <property type="protein sequence ID" value="AAA16866.1"/>
    <property type="molecule type" value="mRNA"/>
</dbReference>
<dbReference type="SMR" id="Q07441"/>
<dbReference type="GlyCosmos" id="Q07441">
    <property type="glycosylation" value="6 sites, No reported glycans"/>
</dbReference>
<dbReference type="GO" id="GO:0009986">
    <property type="term" value="C:cell surface"/>
    <property type="evidence" value="ECO:0007669"/>
    <property type="project" value="TreeGrafter"/>
</dbReference>
<dbReference type="GO" id="GO:0005925">
    <property type="term" value="C:focal adhesion"/>
    <property type="evidence" value="ECO:0007669"/>
    <property type="project" value="TreeGrafter"/>
</dbReference>
<dbReference type="GO" id="GO:0008305">
    <property type="term" value="C:integrin complex"/>
    <property type="evidence" value="ECO:0007669"/>
    <property type="project" value="TreeGrafter"/>
</dbReference>
<dbReference type="GO" id="GO:0005178">
    <property type="term" value="F:integrin binding"/>
    <property type="evidence" value="ECO:0007669"/>
    <property type="project" value="TreeGrafter"/>
</dbReference>
<dbReference type="GO" id="GO:0046872">
    <property type="term" value="F:metal ion binding"/>
    <property type="evidence" value="ECO:0007669"/>
    <property type="project" value="UniProtKB-KW"/>
</dbReference>
<dbReference type="GO" id="GO:0033627">
    <property type="term" value="P:cell adhesion mediated by integrin"/>
    <property type="evidence" value="ECO:0007669"/>
    <property type="project" value="TreeGrafter"/>
</dbReference>
<dbReference type="GO" id="GO:0016477">
    <property type="term" value="P:cell migration"/>
    <property type="evidence" value="ECO:0007669"/>
    <property type="project" value="TreeGrafter"/>
</dbReference>
<dbReference type="GO" id="GO:0098609">
    <property type="term" value="P:cell-cell adhesion"/>
    <property type="evidence" value="ECO:0007669"/>
    <property type="project" value="TreeGrafter"/>
</dbReference>
<dbReference type="GO" id="GO:0007160">
    <property type="term" value="P:cell-matrix adhesion"/>
    <property type="evidence" value="ECO:0007669"/>
    <property type="project" value="TreeGrafter"/>
</dbReference>
<dbReference type="GO" id="GO:0007229">
    <property type="term" value="P:integrin-mediated signaling pathway"/>
    <property type="evidence" value="ECO:0007669"/>
    <property type="project" value="UniProtKB-KW"/>
</dbReference>
<dbReference type="GO" id="GO:0043149">
    <property type="term" value="P:stress fiber assembly"/>
    <property type="evidence" value="ECO:0007669"/>
    <property type="project" value="TreeGrafter"/>
</dbReference>
<dbReference type="GO" id="GO:0007179">
    <property type="term" value="P:transforming growth factor beta receptor signaling pathway"/>
    <property type="evidence" value="ECO:0007669"/>
    <property type="project" value="TreeGrafter"/>
</dbReference>
<dbReference type="FunFam" id="1.20.5.100:FF:000006">
    <property type="entry name" value="Integrin beta"/>
    <property type="match status" value="1"/>
</dbReference>
<dbReference type="FunFam" id="2.10.25.10:FF:000043">
    <property type="entry name" value="Integrin beta"/>
    <property type="match status" value="1"/>
</dbReference>
<dbReference type="FunFam" id="2.10.25.10:FF:000075">
    <property type="entry name" value="Integrin beta"/>
    <property type="match status" value="1"/>
</dbReference>
<dbReference type="FunFam" id="2.10.25.10:FF:000258">
    <property type="entry name" value="Integrin beta"/>
    <property type="match status" value="1"/>
</dbReference>
<dbReference type="FunFam" id="3.40.50.410:FF:000002">
    <property type="entry name" value="Integrin beta"/>
    <property type="match status" value="1"/>
</dbReference>
<dbReference type="FunFam" id="4.10.1240.30:FF:000001">
    <property type="entry name" value="Integrin beta"/>
    <property type="match status" value="1"/>
</dbReference>
<dbReference type="Gene3D" id="4.10.1240.30">
    <property type="match status" value="1"/>
</dbReference>
<dbReference type="Gene3D" id="1.20.5.100">
    <property type="entry name" value="Cytochrome c1, transmembrane anchor, C-terminal"/>
    <property type="match status" value="1"/>
</dbReference>
<dbReference type="Gene3D" id="2.10.25.10">
    <property type="entry name" value="Laminin"/>
    <property type="match status" value="4"/>
</dbReference>
<dbReference type="Gene3D" id="2.60.40.1510">
    <property type="entry name" value="ntegrin, alpha v. Chain A, domain 3"/>
    <property type="match status" value="1"/>
</dbReference>
<dbReference type="Gene3D" id="3.40.50.410">
    <property type="entry name" value="von Willebrand factor, type A domain"/>
    <property type="match status" value="1"/>
</dbReference>
<dbReference type="InterPro" id="IPR040622">
    <property type="entry name" value="I-EGF_1"/>
</dbReference>
<dbReference type="InterPro" id="IPR015812">
    <property type="entry name" value="Integrin_bsu"/>
</dbReference>
<dbReference type="InterPro" id="IPR014836">
    <property type="entry name" value="Integrin_bsu_cyt_dom"/>
</dbReference>
<dbReference type="InterPro" id="IPR012896">
    <property type="entry name" value="Integrin_bsu_tail"/>
</dbReference>
<dbReference type="InterPro" id="IPR036349">
    <property type="entry name" value="Integrin_bsu_tail_dom_sf"/>
</dbReference>
<dbReference type="InterPro" id="IPR002369">
    <property type="entry name" value="Integrin_bsu_VWA"/>
</dbReference>
<dbReference type="InterPro" id="IPR032695">
    <property type="entry name" value="Integrin_dom_sf"/>
</dbReference>
<dbReference type="InterPro" id="IPR036465">
    <property type="entry name" value="vWFA_dom_sf"/>
</dbReference>
<dbReference type="PANTHER" id="PTHR10082">
    <property type="entry name" value="INTEGRIN BETA SUBUNIT"/>
    <property type="match status" value="1"/>
</dbReference>
<dbReference type="PANTHER" id="PTHR10082:SF26">
    <property type="entry name" value="INTEGRIN BETA-5"/>
    <property type="match status" value="1"/>
</dbReference>
<dbReference type="Pfam" id="PF23105">
    <property type="entry name" value="EGF_integrin"/>
    <property type="match status" value="1"/>
</dbReference>
<dbReference type="Pfam" id="PF18372">
    <property type="entry name" value="I-EGF_1"/>
    <property type="match status" value="1"/>
</dbReference>
<dbReference type="Pfam" id="PF08725">
    <property type="entry name" value="Integrin_b_cyt"/>
    <property type="match status" value="1"/>
</dbReference>
<dbReference type="Pfam" id="PF07965">
    <property type="entry name" value="Integrin_B_tail"/>
    <property type="match status" value="1"/>
</dbReference>
<dbReference type="Pfam" id="PF00362">
    <property type="entry name" value="Integrin_beta"/>
    <property type="match status" value="1"/>
</dbReference>
<dbReference type="PRINTS" id="PR01186">
    <property type="entry name" value="INTEGRINB"/>
</dbReference>
<dbReference type="SMART" id="SM00187">
    <property type="entry name" value="INB"/>
    <property type="match status" value="1"/>
</dbReference>
<dbReference type="SMART" id="SM01241">
    <property type="entry name" value="Integrin_b_cyt"/>
    <property type="match status" value="1"/>
</dbReference>
<dbReference type="SMART" id="SM01242">
    <property type="entry name" value="Integrin_B_tail"/>
    <property type="match status" value="1"/>
</dbReference>
<dbReference type="SUPFAM" id="SSF57196">
    <property type="entry name" value="EGF/Laminin"/>
    <property type="match status" value="2"/>
</dbReference>
<dbReference type="SUPFAM" id="SSF69687">
    <property type="entry name" value="Integrin beta tail domain"/>
    <property type="match status" value="1"/>
</dbReference>
<dbReference type="SUPFAM" id="SSF69179">
    <property type="entry name" value="Integrin domains"/>
    <property type="match status" value="1"/>
</dbReference>
<dbReference type="SUPFAM" id="SSF53300">
    <property type="entry name" value="vWA-like"/>
    <property type="match status" value="1"/>
</dbReference>
<dbReference type="PROSITE" id="PS00022">
    <property type="entry name" value="EGF_1"/>
    <property type="match status" value="2"/>
</dbReference>
<dbReference type="PROSITE" id="PS01186">
    <property type="entry name" value="EGF_2"/>
    <property type="match status" value="2"/>
</dbReference>
<dbReference type="PROSITE" id="PS00243">
    <property type="entry name" value="I_EGF_1"/>
    <property type="match status" value="2"/>
</dbReference>
<dbReference type="PROSITE" id="PS52047">
    <property type="entry name" value="I_EGF_2"/>
    <property type="match status" value="4"/>
</dbReference>
<proteinExistence type="evidence at transcript level"/>
<protein>
    <recommendedName>
        <fullName>Integrin beta-5</fullName>
    </recommendedName>
</protein>
<evidence type="ECO:0000250" key="1">
    <source>
        <dbReference type="UniProtKB" id="O70309"/>
    </source>
</evidence>
<evidence type="ECO:0000250" key="2">
    <source>
        <dbReference type="UniProtKB" id="P05106"/>
    </source>
</evidence>
<evidence type="ECO:0000250" key="3">
    <source>
        <dbReference type="UniProtKB" id="P18084"/>
    </source>
</evidence>
<evidence type="ECO:0000255" key="4"/>
<evidence type="ECO:0000255" key="5">
    <source>
        <dbReference type="PROSITE-ProRule" id="PRU01392"/>
    </source>
</evidence>
<evidence type="ECO:0000305" key="6"/>
<organism>
    <name type="scientific">Papio cynocephalus</name>
    <name type="common">Yellow baboon</name>
    <dbReference type="NCBI Taxonomy" id="9556"/>
    <lineage>
        <taxon>Eukaryota</taxon>
        <taxon>Metazoa</taxon>
        <taxon>Chordata</taxon>
        <taxon>Craniata</taxon>
        <taxon>Vertebrata</taxon>
        <taxon>Euteleostomi</taxon>
        <taxon>Mammalia</taxon>
        <taxon>Eutheria</taxon>
        <taxon>Euarchontoglires</taxon>
        <taxon>Primates</taxon>
        <taxon>Haplorrhini</taxon>
        <taxon>Catarrhini</taxon>
        <taxon>Cercopithecidae</taxon>
        <taxon>Cercopithecinae</taxon>
        <taxon>Papio</taxon>
    </lineage>
</organism>
<accession>Q07441</accession>
<sequence>DLSLSMKDDLDTIRNLGTKLAEEMRKLTSNFRLGFGSFVDKDISPFSYTAPRYQTNPCIGYKLFPNCVPSFGFRHLLPLTDRVDSFNEEVRKQRVSRNRDAPEGCFDAVLQAAVCKEKIGWRKDALHLLVFTTDDVPHIALDGKLGGLVQPHDGQCHLNEANEYTASNQMDYPSLALLGEKLAENNINLIFAVTKNHYMLYKNFTALIPGTTVEILDGDSKNIIQLIINAYNSIRSKVELSVWDQPEDLNLFFTATCQDGVSYPGQRKCEGLKIGDTASFEVSVEARSCPSRHTEHVFALQPVGCRDSLEVGVTYNCTCGCSVGLEPNSARCSGTGTYVCGLCECSPGYLGTRCECQDGENHSVYQNLCRDTEGKPLCSGRGDCSCNQCSCFESEFGKIYGPFCECDNFSCARNKGVLCSGHGECHCGECKCHAGYIGDNCNCSTDISTCRGRDGQICSERGHCLCGQCQCTEPGAFGEMCEKCPTCPDACSTKRDCVECPLLHSGKPDNQTCHSLCRDEVITWVDTIVKDDQEAVLCFYKTAKDCVMMFTYVELPSGKSNLTVLREPECGNTPNAMTILLAVVGSILLVGLALLAIWKLLVTIHDRREFAKFQSERSRARYEMASNPLYRKPISTHTVDFTFNKFNKSYNGTVD</sequence>
<name>ITB5_PAPCY</name>
<gene>
    <name type="primary">ITGB5</name>
</gene>
<feature type="chain" id="PRO_0000174222" description="Integrin beta-5">
    <location>
        <begin position="1" status="less than"/>
        <end position="655"/>
    </location>
</feature>
<feature type="topological domain" description="Extracellular" evidence="4">
    <location>
        <begin position="1" status="less than"/>
        <end position="575"/>
    </location>
</feature>
<feature type="transmembrane region" description="Helical" evidence="4">
    <location>
        <begin position="576"/>
        <end position="598"/>
    </location>
</feature>
<feature type="topological domain" description="Cytoplasmic" evidence="4">
    <location>
        <begin position="599"/>
        <end position="655"/>
    </location>
</feature>
<feature type="domain" description="VWFA" evidence="2">
    <location>
        <begin position="1" status="less than"/>
        <end position="234"/>
    </location>
</feature>
<feature type="domain" description="I-EGF 1" evidence="5">
    <location>
        <begin position="321"/>
        <end position="355"/>
    </location>
</feature>
<feature type="domain" description="I-EGF 2" evidence="5">
    <location>
        <begin position="356"/>
        <end position="405"/>
    </location>
</feature>
<feature type="domain" description="I-EGF 3" evidence="5">
    <location>
        <begin position="406"/>
        <end position="442"/>
    </location>
</feature>
<feature type="domain" description="I-EGF 4" evidence="5">
    <location>
        <begin position="443"/>
        <end position="482"/>
    </location>
</feature>
<feature type="binding site" description="in MIDAS binding site" evidence="2">
    <location>
        <position position="3"/>
    </location>
    <ligand>
        <name>Mg(2+)</name>
        <dbReference type="ChEBI" id="CHEBI:18420"/>
    </ligand>
</feature>
<feature type="binding site" description="in ADMIDAS binding site" evidence="2">
    <location>
        <position position="5"/>
    </location>
    <ligand>
        <name>Ca(2+)</name>
        <dbReference type="ChEBI" id="CHEBI:29108"/>
        <label>1</label>
    </ligand>
</feature>
<feature type="binding site" description="in MIDAS binding site" evidence="2">
    <location>
        <position position="5"/>
    </location>
    <ligand>
        <name>Mg(2+)</name>
        <dbReference type="ChEBI" id="CHEBI:18420"/>
    </ligand>
</feature>
<feature type="binding site" description="in ADMIDAS binding site" evidence="2">
    <location>
        <position position="8"/>
    </location>
    <ligand>
        <name>Ca(2+)</name>
        <dbReference type="ChEBI" id="CHEBI:29108"/>
        <label>1</label>
    </ligand>
</feature>
<feature type="binding site" description="in ADMIDAS binding site" evidence="2">
    <location>
        <position position="9"/>
    </location>
    <ligand>
        <name>Ca(2+)</name>
        <dbReference type="ChEBI" id="CHEBI:29108"/>
        <label>1</label>
    </ligand>
</feature>
<feature type="binding site" description="in LIMBS binding site" evidence="2">
    <location>
        <position position="40"/>
    </location>
    <ligand>
        <name>Ca(2+)</name>
        <dbReference type="ChEBI" id="CHEBI:29108"/>
        <label>2</label>
    </ligand>
</feature>
<feature type="binding site" description="in LIMBS binding site" evidence="2">
    <location>
        <position position="98"/>
    </location>
    <ligand>
        <name>Ca(2+)</name>
        <dbReference type="ChEBI" id="CHEBI:29108"/>
        <label>2</label>
    </ligand>
</feature>
<feature type="binding site" description="in LIMBS binding site" evidence="2">
    <location>
        <position position="100"/>
    </location>
    <ligand>
        <name>Ca(2+)</name>
        <dbReference type="ChEBI" id="CHEBI:29108"/>
        <label>2</label>
    </ligand>
</feature>
<feature type="binding site" description="in LIMBS binding site" evidence="2">
    <location>
        <position position="102"/>
    </location>
    <ligand>
        <name>Ca(2+)</name>
        <dbReference type="ChEBI" id="CHEBI:29108"/>
        <label>2</label>
    </ligand>
</feature>
<feature type="binding site" description="in LIMBS binding site" evidence="2">
    <location>
        <position position="103"/>
    </location>
    <ligand>
        <name>Ca(2+)</name>
        <dbReference type="ChEBI" id="CHEBI:29108"/>
        <label>2</label>
    </ligand>
</feature>
<feature type="binding site" description="in MIDAS binding site" evidence="2">
    <location>
        <position position="103"/>
    </location>
    <ligand>
        <name>Mg(2+)</name>
        <dbReference type="ChEBI" id="CHEBI:18420"/>
    </ligand>
</feature>
<feature type="binding site" description="in ADMIDAS binding site" evidence="2">
    <location>
        <position position="218"/>
    </location>
    <ligand>
        <name>Ca(2+)</name>
        <dbReference type="ChEBI" id="CHEBI:29108"/>
        <label>1</label>
    </ligand>
</feature>
<feature type="modified residue" description="Phosphoserine" evidence="3">
    <location>
        <position position="626"/>
    </location>
</feature>
<feature type="glycosylation site" description="N-linked (GlcNAc...) asparagine" evidence="4">
    <location>
        <position position="203"/>
    </location>
</feature>
<feature type="glycosylation site" description="N-linked (GlcNAc...) asparagine" evidence="4">
    <location>
        <position position="316"/>
    </location>
</feature>
<feature type="glycosylation site" description="N-linked (GlcNAc...) asparagine" evidence="4">
    <location>
        <position position="408"/>
    </location>
</feature>
<feature type="glycosylation site" description="N-linked (GlcNAc...) asparagine" evidence="4">
    <location>
        <position position="442"/>
    </location>
</feature>
<feature type="glycosylation site" description="N-linked (GlcNAc...) asparagine" evidence="4">
    <location>
        <position position="510"/>
    </location>
</feature>
<feature type="glycosylation site" description="N-linked (GlcNAc...) asparagine" evidence="4">
    <location>
        <position position="561"/>
    </location>
</feature>
<feature type="disulfide bond" evidence="2">
    <location>
        <begin position="58"/>
        <end position="67"/>
    </location>
</feature>
<feature type="disulfide bond" evidence="2">
    <location>
        <begin position="115"/>
        <end position="156"/>
    </location>
</feature>
<feature type="disulfide bond" evidence="2">
    <location>
        <begin position="257"/>
        <end position="269"/>
    </location>
</feature>
<feature type="disulfide bond" evidence="2">
    <location>
        <begin position="289"/>
        <end position="317"/>
    </location>
</feature>
<feature type="disulfide bond" evidence="5">
    <location>
        <begin position="321"/>
        <end position="340"/>
    </location>
</feature>
<feature type="disulfide bond" evidence="5">
    <location>
        <begin position="332"/>
        <end position="343"/>
    </location>
</feature>
<feature type="disulfide bond" evidence="5">
    <location>
        <begin position="345"/>
        <end position="354"/>
    </location>
</feature>
<feature type="disulfide bond" evidence="5">
    <location>
        <begin position="356"/>
        <end position="386"/>
    </location>
</feature>
<feature type="disulfide bond" evidence="5">
    <location>
        <begin position="369"/>
        <end position="384"/>
    </location>
</feature>
<feature type="disulfide bond" evidence="5">
    <location>
        <begin position="378"/>
        <end position="389"/>
    </location>
</feature>
<feature type="disulfide bond" evidence="5">
    <location>
        <begin position="391"/>
        <end position="404"/>
    </location>
</feature>
<feature type="disulfide bond" evidence="5">
    <location>
        <begin position="406"/>
        <end position="427"/>
    </location>
</feature>
<feature type="disulfide bond" evidence="5">
    <location>
        <begin position="411"/>
        <end position="425"/>
    </location>
</feature>
<feature type="disulfide bond" evidence="5">
    <location>
        <begin position="419"/>
        <end position="430"/>
    </location>
</feature>
<feature type="disulfide bond" evidence="5">
    <location>
        <begin position="432"/>
        <end position="441"/>
    </location>
</feature>
<feature type="disulfide bond" evidence="5">
    <location>
        <begin position="443"/>
        <end position="466"/>
    </location>
</feature>
<feature type="disulfide bond" evidence="5">
    <location>
        <begin position="450"/>
        <end position="464"/>
    </location>
</feature>
<feature type="disulfide bond" evidence="5">
    <location>
        <begin position="458"/>
        <end position="469"/>
    </location>
</feature>
<feature type="disulfide bond" evidence="5">
    <location>
        <begin position="471"/>
        <end position="481"/>
    </location>
</feature>
<feature type="disulfide bond" evidence="2">
    <location>
        <begin position="484"/>
        <end position="487"/>
    </location>
</feature>
<feature type="disulfide bond" evidence="2">
    <location>
        <begin position="491"/>
        <end position="538"/>
    </location>
</feature>
<feature type="disulfide bond" evidence="2">
    <location>
        <begin position="497"/>
        <end position="517"/>
    </location>
</feature>
<feature type="disulfide bond" evidence="2">
    <location>
        <begin position="500"/>
        <end position="513"/>
    </location>
</feature>
<feature type="disulfide bond" evidence="2">
    <location>
        <begin position="546"/>
        <end position="570"/>
    </location>
</feature>
<feature type="non-terminal residue">
    <location>
        <position position="1"/>
    </location>
</feature>
<comment type="function">
    <text>Integrin alpha-V/beta-5 (ITGAV:ITGB5) is a receptor for fibronectin. It recognizes the sequence R-G-D in its ligand.</text>
</comment>
<comment type="subunit">
    <text evidence="1 3">Heterodimer of an alpha and a beta subunit. Beta-5 (ITGB5) associates with alpha-V (ITGAV). Interacts with MYO10. Interacts with DAB2. Integrin ITGAV:ITGB5 interacts with FBLN5 (via N-terminus) (By similarity). ITGAV:ITGB5 interacts with CCN3 (By similarity). Interacts with tensin TNS3; TNS3 also interacts with PEAK1, thus acting as an adapter molecule to bridge the association of PEAK1 with ITGB5 (By similarity).</text>
</comment>
<comment type="subcellular location">
    <subcellularLocation>
        <location>Cell membrane</location>
        <topology>Single-pass type I membrane protein</topology>
    </subcellularLocation>
</comment>
<comment type="domain">
    <text evidence="2">The VWFA domain (or beta I domain) contains three cation-binding sites: the ligand-associated metal ion-binding site (LIMBS or SyMBS), the metal ion-dependent adhesion site (MIDAS), and the adjacent MIDAS site (ADMIDAS). This domain is also part of the ligand-binding site.</text>
</comment>
<comment type="similarity">
    <text evidence="6">Belongs to the integrin beta chain family.</text>
</comment>
<reference key="1">
    <citation type="journal article" date="1993" name="Gene">
        <title>Human and baboon integrin beta 5 subunit-encoding mRNAs have alternative polyadenylation sites.</title>
        <authorList>
            <person name="Shoji M."/>
            <person name="Hayzer D.J."/>
            <person name="Kim T.M."/>
            <person name="Runge M.S."/>
            <person name="Hanson S.R."/>
        </authorList>
    </citation>
    <scope>NUCLEOTIDE SEQUENCE [MRNA]</scope>
</reference>